<keyword id="KW-0217">Developmental protein</keyword>
<keyword id="KW-0238">DNA-binding</keyword>
<keyword id="KW-0371">Homeobox</keyword>
<keyword id="KW-0539">Nucleus</keyword>
<keyword id="KW-1185">Reference proteome</keyword>
<accession>P41934</accession>
<feature type="chain" id="PRO_0000100782" description="Homeobox protein ceh-18">
    <location>
        <begin position="1"/>
        <end position="542"/>
    </location>
</feature>
<feature type="domain" description="POU-specific" evidence="2">
    <location>
        <begin position="290"/>
        <end position="364"/>
    </location>
</feature>
<feature type="DNA-binding region" description="Homeobox" evidence="1">
    <location>
        <begin position="421"/>
        <end position="480"/>
    </location>
</feature>
<feature type="region of interest" description="Disordered" evidence="3">
    <location>
        <begin position="243"/>
        <end position="264"/>
    </location>
</feature>
<feature type="region of interest" description="Disordered" evidence="3">
    <location>
        <begin position="514"/>
        <end position="542"/>
    </location>
</feature>
<feature type="compositionally biased region" description="Polar residues" evidence="3">
    <location>
        <begin position="243"/>
        <end position="252"/>
    </location>
</feature>
<feature type="compositionally biased region" description="Polar residues" evidence="3">
    <location>
        <begin position="517"/>
        <end position="530"/>
    </location>
</feature>
<gene>
    <name evidence="8 10" type="primary">ceh-18</name>
    <name evidence="10" type="ORF">ZC64.3</name>
</gene>
<organism>
    <name type="scientific">Caenorhabditis elegans</name>
    <dbReference type="NCBI Taxonomy" id="6239"/>
    <lineage>
        <taxon>Eukaryota</taxon>
        <taxon>Metazoa</taxon>
        <taxon>Ecdysozoa</taxon>
        <taxon>Nematoda</taxon>
        <taxon>Chromadorea</taxon>
        <taxon>Rhabditida</taxon>
        <taxon>Rhabditina</taxon>
        <taxon>Rhabditomorpha</taxon>
        <taxon>Rhabditoidea</taxon>
        <taxon>Rhabditidae</taxon>
        <taxon>Peloderinae</taxon>
        <taxon>Caenorhabditis</taxon>
    </lineage>
</organism>
<dbReference type="EMBL" id="U16367">
    <property type="protein sequence ID" value="AAA52203.1"/>
    <property type="molecule type" value="mRNA"/>
</dbReference>
<dbReference type="EMBL" id="BX284606">
    <property type="protein sequence ID" value="CCD71431.1"/>
    <property type="molecule type" value="Genomic_DNA"/>
</dbReference>
<dbReference type="PIR" id="A54963">
    <property type="entry name" value="A54963"/>
</dbReference>
<dbReference type="RefSeq" id="NP_741758.1">
    <property type="nucleotide sequence ID" value="NM_171659.7"/>
</dbReference>
<dbReference type="SMR" id="P41934"/>
<dbReference type="BioGRID" id="45607">
    <property type="interactions" value="23"/>
</dbReference>
<dbReference type="FunCoup" id="P41934">
    <property type="interactions" value="195"/>
</dbReference>
<dbReference type="IntAct" id="P41934">
    <property type="interactions" value="15"/>
</dbReference>
<dbReference type="STRING" id="6239.ZC64.3a.1"/>
<dbReference type="PaxDb" id="6239-ZC64.3a"/>
<dbReference type="EnsemblMetazoa" id="ZC64.3a.1">
    <property type="protein sequence ID" value="ZC64.3a.1"/>
    <property type="gene ID" value="WBGene00000441"/>
</dbReference>
<dbReference type="GeneID" id="180671"/>
<dbReference type="KEGG" id="cel:CELE_ZC64.3"/>
<dbReference type="UCSC" id="ZC64.3b">
    <property type="organism name" value="c. elegans"/>
</dbReference>
<dbReference type="AGR" id="WB:WBGene00000441"/>
<dbReference type="CTD" id="180671"/>
<dbReference type="WormBase" id="ZC64.3a">
    <property type="protein sequence ID" value="CE25674"/>
    <property type="gene ID" value="WBGene00000441"/>
    <property type="gene designation" value="ceh-18"/>
</dbReference>
<dbReference type="eggNOG" id="KOG3802">
    <property type="taxonomic scope" value="Eukaryota"/>
</dbReference>
<dbReference type="GeneTree" id="ENSGT00940000171806"/>
<dbReference type="HOGENOM" id="CLU_039438_0_0_1"/>
<dbReference type="InParanoid" id="P41934"/>
<dbReference type="OMA" id="DMNQRNA"/>
<dbReference type="OrthoDB" id="6358449at2759"/>
<dbReference type="PhylomeDB" id="P41934"/>
<dbReference type="SignaLink" id="P41934"/>
<dbReference type="PRO" id="PR:P41934"/>
<dbReference type="Proteomes" id="UP000001940">
    <property type="component" value="Chromosome X"/>
</dbReference>
<dbReference type="Bgee" id="WBGene00000441">
    <property type="expression patterns" value="Expressed in larva and 3 other cell types or tissues"/>
</dbReference>
<dbReference type="GO" id="GO:0005634">
    <property type="term" value="C:nucleus"/>
    <property type="evidence" value="ECO:0000314"/>
    <property type="project" value="WormBase"/>
</dbReference>
<dbReference type="GO" id="GO:0003700">
    <property type="term" value="F:DNA-binding transcription factor activity"/>
    <property type="evidence" value="ECO:0000250"/>
    <property type="project" value="WormBase"/>
</dbReference>
<dbReference type="GO" id="GO:0000981">
    <property type="term" value="F:DNA-binding transcription factor activity, RNA polymerase II-specific"/>
    <property type="evidence" value="ECO:0000318"/>
    <property type="project" value="GO_Central"/>
</dbReference>
<dbReference type="GO" id="GO:0000978">
    <property type="term" value="F:RNA polymerase II cis-regulatory region sequence-specific DNA binding"/>
    <property type="evidence" value="ECO:0000318"/>
    <property type="project" value="GO_Central"/>
</dbReference>
<dbReference type="GO" id="GO:0008340">
    <property type="term" value="P:determination of adult lifespan"/>
    <property type="evidence" value="ECO:0000316"/>
    <property type="project" value="UniProtKB"/>
</dbReference>
<dbReference type="GO" id="GO:0008544">
    <property type="term" value="P:epidermis development"/>
    <property type="evidence" value="ECO:0000315"/>
    <property type="project" value="WormBase"/>
</dbReference>
<dbReference type="GO" id="GO:0008354">
    <property type="term" value="P:germ cell migration"/>
    <property type="evidence" value="ECO:0000315"/>
    <property type="project" value="WormBase"/>
</dbReference>
<dbReference type="GO" id="GO:1900194">
    <property type="term" value="P:negative regulation of oocyte maturation"/>
    <property type="evidence" value="ECO:0000315"/>
    <property type="project" value="UniProtKB"/>
</dbReference>
<dbReference type="GO" id="GO:0001556">
    <property type="term" value="P:oocyte maturation"/>
    <property type="evidence" value="ECO:0000315"/>
    <property type="project" value="WormBase"/>
</dbReference>
<dbReference type="GO" id="GO:0030728">
    <property type="term" value="P:ovulation"/>
    <property type="evidence" value="ECO:0000315"/>
    <property type="project" value="WormBase"/>
</dbReference>
<dbReference type="GO" id="GO:0006357">
    <property type="term" value="P:regulation of transcription by RNA polymerase II"/>
    <property type="evidence" value="ECO:0000318"/>
    <property type="project" value="GO_Central"/>
</dbReference>
<dbReference type="CDD" id="cd00086">
    <property type="entry name" value="homeodomain"/>
    <property type="match status" value="1"/>
</dbReference>
<dbReference type="FunFam" id="1.10.260.40:FF:000001">
    <property type="entry name" value="POU domain protein"/>
    <property type="match status" value="1"/>
</dbReference>
<dbReference type="Gene3D" id="1.10.10.60">
    <property type="entry name" value="Homeodomain-like"/>
    <property type="match status" value="1"/>
</dbReference>
<dbReference type="Gene3D" id="1.10.260.40">
    <property type="entry name" value="lambda repressor-like DNA-binding domains"/>
    <property type="match status" value="1"/>
</dbReference>
<dbReference type="InterPro" id="IPR001356">
    <property type="entry name" value="HD"/>
</dbReference>
<dbReference type="InterPro" id="IPR017970">
    <property type="entry name" value="Homeobox_CS"/>
</dbReference>
<dbReference type="InterPro" id="IPR009057">
    <property type="entry name" value="Homeodomain-like_sf"/>
</dbReference>
<dbReference type="InterPro" id="IPR010982">
    <property type="entry name" value="Lambda_DNA-bd_dom_sf"/>
</dbReference>
<dbReference type="InterPro" id="IPR013847">
    <property type="entry name" value="POU"/>
</dbReference>
<dbReference type="InterPro" id="IPR000327">
    <property type="entry name" value="POU_dom"/>
</dbReference>
<dbReference type="InterPro" id="IPR050255">
    <property type="entry name" value="POU_domain_TF"/>
</dbReference>
<dbReference type="PANTHER" id="PTHR11636:SF137">
    <property type="entry name" value="HOMEOBOX PROTEIN CEH-18"/>
    <property type="match status" value="1"/>
</dbReference>
<dbReference type="PANTHER" id="PTHR11636">
    <property type="entry name" value="POU DOMAIN"/>
    <property type="match status" value="1"/>
</dbReference>
<dbReference type="Pfam" id="PF00046">
    <property type="entry name" value="Homeodomain"/>
    <property type="match status" value="1"/>
</dbReference>
<dbReference type="Pfam" id="PF00157">
    <property type="entry name" value="Pou"/>
    <property type="match status" value="1"/>
</dbReference>
<dbReference type="PRINTS" id="PR00028">
    <property type="entry name" value="POUDOMAIN"/>
</dbReference>
<dbReference type="SMART" id="SM00389">
    <property type="entry name" value="HOX"/>
    <property type="match status" value="1"/>
</dbReference>
<dbReference type="SMART" id="SM00352">
    <property type="entry name" value="POU"/>
    <property type="match status" value="1"/>
</dbReference>
<dbReference type="SUPFAM" id="SSF46689">
    <property type="entry name" value="Homeodomain-like"/>
    <property type="match status" value="1"/>
</dbReference>
<dbReference type="SUPFAM" id="SSF47413">
    <property type="entry name" value="lambda repressor-like DNA-binding domains"/>
    <property type="match status" value="1"/>
</dbReference>
<dbReference type="PROSITE" id="PS00027">
    <property type="entry name" value="HOMEOBOX_1"/>
    <property type="match status" value="1"/>
</dbReference>
<dbReference type="PROSITE" id="PS50071">
    <property type="entry name" value="HOMEOBOX_2"/>
    <property type="match status" value="1"/>
</dbReference>
<dbReference type="PROSITE" id="PS00035">
    <property type="entry name" value="POU_1"/>
    <property type="match status" value="1"/>
</dbReference>
<dbReference type="PROSITE" id="PS00465">
    <property type="entry name" value="POU_2"/>
    <property type="match status" value="1"/>
</dbReference>
<dbReference type="PROSITE" id="PS51179">
    <property type="entry name" value="POU_3"/>
    <property type="match status" value="1"/>
</dbReference>
<evidence type="ECO:0000255" key="1">
    <source>
        <dbReference type="PROSITE-ProRule" id="PRU00108"/>
    </source>
</evidence>
<evidence type="ECO:0000255" key="2">
    <source>
        <dbReference type="PROSITE-ProRule" id="PRU00530"/>
    </source>
</evidence>
<evidence type="ECO:0000256" key="3">
    <source>
        <dbReference type="SAM" id="MobiDB-lite"/>
    </source>
</evidence>
<evidence type="ECO:0000269" key="4">
    <source>
    </source>
</evidence>
<evidence type="ECO:0000269" key="5">
    <source>
    </source>
</evidence>
<evidence type="ECO:0000269" key="6">
    <source>
    </source>
</evidence>
<evidence type="ECO:0000269" key="7">
    <source>
    </source>
</evidence>
<evidence type="ECO:0000303" key="8">
    <source>
    </source>
</evidence>
<evidence type="ECO:0000305" key="9"/>
<evidence type="ECO:0000312" key="10">
    <source>
        <dbReference type="WormBase" id="ZC64.3a"/>
    </source>
</evidence>
<proteinExistence type="evidence at protein level"/>
<name>HM18_CAEEL</name>
<sequence>MNTLENTFQFLAEVFEANGGCLVTERVSPSLSGASKRKSRPVKRIITEDEVIPEEEVVEEEEEEKVEQPSEEVTCPAMQVDATDAILASLRQIANNDLSEHCIREDEGNTSAEVFSNGNGEDMEQAGLAGTDLLRRVADMLQGNHNGSLNSHFLQQQFAAFKETVDPTPVSTNGNGLLTPITTQLSPLFTSTDAFNSPEKLLQAIMTPSLGFLGANGLGASNSGLLSSPLIAPSPTLLQSLMNTPTQPTASLTPKKAENRPPVVSQTLKASKRRLFDDTSRIEAASMSGDDRIDMNELEAFAQTFKKQRIKFGFTQGDVGVALGKRYGTDFSQTTISRFEALNLSFKNMCKLRPLLKEWLADVEMAIEGGATVTDLIDKKTIHNGNHHTIHHVDIHETSISNSISSVTASSLLSREQHVKRRRKRTNLDMNQRNALDTFFALNPRPDHDKMTDIANSLELDRDVVRVWFCNRRQKMRRVDEPIEGEMVTPSVSPVFPHFSSMSALEQIQEAARLASCQASNDDSDGTSGSPDAPSNDGCSDL</sequence>
<protein>
    <recommendedName>
        <fullName>Homeobox protein ceh-18</fullName>
    </recommendedName>
</protein>
<reference key="1">
    <citation type="journal article" date="1994" name="Genes Dev.">
        <title>Targeted mutations in the Caenorhabditis elegans POU homeo box gene ceh-18 cause defects in oocyte cell cycle arrest, gonad migration, and epidermal differentiation.</title>
        <authorList>
            <person name="Greenstein D."/>
            <person name="Hird S."/>
            <person name="Plasterk R.H.A."/>
            <person name="Andachi Y."/>
            <person name="Kohara Y."/>
            <person name="Wang B."/>
            <person name="Finney M."/>
            <person name="Ruvkun G."/>
        </authorList>
    </citation>
    <scope>NUCLEOTIDE SEQUENCE [MRNA]</scope>
    <scope>FUNCTION</scope>
    <scope>SUBCELLULAR LOCATION</scope>
    <scope>TISSUE SPECIFICITY</scope>
    <scope>DEVELOPMENTAL STAGE</scope>
    <scope>DISRUPTION PHENOTYPE</scope>
    <source>
        <strain>Bristol N2</strain>
    </source>
</reference>
<reference key="2">
    <citation type="journal article" date="1998" name="Science">
        <title>Genome sequence of the nematode C. elegans: a platform for investigating biology.</title>
        <authorList>
            <consortium name="The C. elegans sequencing consortium"/>
        </authorList>
    </citation>
    <scope>NUCLEOTIDE SEQUENCE [LARGE SCALE GENOMIC DNA]</scope>
    <source>
        <strain>Bristol N2</strain>
    </source>
</reference>
<reference key="3">
    <citation type="journal article" date="1997" name="Dev. Biol.">
        <title>The POU gene ceh-18 promotes gonadal sheath cell differentiation and function required for meiotic maturation and ovulation in Caenorhabditis elegans.</title>
        <authorList>
            <person name="Rose K.L."/>
            <person name="Winfrey V.P."/>
            <person name="Hoffman L.H."/>
            <person name="Hall D.H."/>
            <person name="Furuta T."/>
            <person name="Greenstein D."/>
        </authorList>
    </citation>
    <scope>FUNCTION</scope>
    <scope>DISRUPTION PHENOTYPE</scope>
</reference>
<reference key="4">
    <citation type="journal article" date="2003" name="Genes Dev.">
        <title>An Eph receptor sperm-sensing control mechanism for oocyte meiotic maturation in Caenorhabditis elegans.</title>
        <authorList>
            <person name="Miller M.A."/>
            <person name="Ruest P.J."/>
            <person name="Kosinski M."/>
            <person name="Hanks S.K."/>
            <person name="Greenstein D."/>
        </authorList>
    </citation>
    <scope>FUNCTION</scope>
    <scope>DISRUPTION PHENOTYPE</scope>
</reference>
<reference key="5">
    <citation type="journal article" date="2018" name="PLoS Genet.">
        <title>Evolutionary plasticity in the innate immune function of Akirin.</title>
        <authorList>
            <person name="Polanowska J."/>
            <person name="Chen J.X."/>
            <person name="Soule J."/>
            <person name="Omi S."/>
            <person name="Belougne J."/>
            <person name="Taffoni C."/>
            <person name="Pujol N."/>
            <person name="Selbach M."/>
            <person name="Zugasti O."/>
            <person name="Ewbank J.J."/>
        </authorList>
    </citation>
    <scope>FUNCTION</scope>
    <scope>INTERACTION WITH AKIR-1</scope>
    <scope>DISRUPTION PHENOTYPE</scope>
</reference>
<comment type="function">
    <text evidence="4 5 6 7">Directs gonadal sheath cell differentiation and function (PubMed:9405097). Also directs gonad migration and plays a role in specifying the differentiated phenotypes of epidermal cells during postembryonic development (PubMed:7958868). Plays a role in oogenesis, regulating a sheath cell signal that causes oocytes to maintain diakinesis arrest during meiosis (PubMed:7958868). Negatively regulates oocyte maturation, ovulation and MAPK activation in oocytes when sperm are not available for fertilization (PubMed:12533508). May be recruited by akir-1 to the promoter regions of antimicrobial peptide genes to control gene expression in response to fungal infection (PubMed:30036395).</text>
</comment>
<comment type="subunit">
    <text evidence="5">Interacts with akir-1.</text>
</comment>
<comment type="subcellular location">
    <subcellularLocation>
        <location evidence="6">Nucleus</location>
    </subcellularLocation>
</comment>
<comment type="tissue specificity">
    <text evidence="6">Expressed in the gonadal sheath cells that signal the oocyte, but not in the oocyte.</text>
</comment>
<comment type="developmental stage">
    <text evidence="6">First expressed in embryos at the three-fold stage (PubMed:7958868). After hatching expressed in the syncytial hypodermal cells located throughout the body, pharyngeal muscle, seam cells P hypodermal blast cells, body muscle and anterior touch cells (PubMed:7958868). Expressed in the distal tip cell of the somatic ginad from the L2 stage of larval development through to the adult stage (PubMed:7958868).</text>
</comment>
<comment type="disruption phenotype">
    <text evidence="4 5 6 7">Viable, but some animals exhibit sterile and lethal phenotypes including hermaphrodite sterility, embryonic lethality and larval arrest (PubMed:7958868). Defective ovulation and terminal differentiation of oocytes, which result from a delay or an inability to complete meiosis during oogenesis (PubMed:7958868, PubMed:9405097). Defects in gonadal migration (PubMed:7958868). Defective sheath cell differentiation in terms of cell shape and position and defective functions which include weaker sheath cell contractions (PubMed:9405097). Abnormal hypodermal cell differentiation (PubMed:7958868). Defective MAPK activation in oocytes in the presence and absence of sperm (PubMed:12533508). RNAi-mediated knockdown reduces survival following fungal infection by D.coniospora (PubMed:30036395).</text>
</comment>
<comment type="similarity">
    <text evidence="9">Belongs to the POU transcription factor family.</text>
</comment>